<comment type="function">
    <text evidence="1">Forms part of the ribosomal stalk which helps the ribosome interact with GTP-bound translation factors. Is thus essential for accurate translation.</text>
</comment>
<comment type="subunit">
    <text evidence="1">Homodimer. Part of the ribosomal stalk of the 50S ribosomal subunit. Forms a multimeric L10(L12)X complex, where L10 forms an elongated spine to which 2 to 4 L12 dimers bind in a sequential fashion. Binds GTP-bound translation factors.</text>
</comment>
<comment type="similarity">
    <text evidence="1">Belongs to the bacterial ribosomal protein bL12 family.</text>
</comment>
<dbReference type="EMBL" id="FM204883">
    <property type="protein sequence ID" value="CAW94229.1"/>
    <property type="molecule type" value="Genomic_DNA"/>
</dbReference>
<dbReference type="RefSeq" id="WP_012677786.1">
    <property type="nucleotide sequence ID" value="NC_012471.1"/>
</dbReference>
<dbReference type="SMR" id="C0M8X3"/>
<dbReference type="GeneID" id="83705092"/>
<dbReference type="KEGG" id="seu:SEQ_1390"/>
<dbReference type="HOGENOM" id="CLU_086499_3_2_9"/>
<dbReference type="OrthoDB" id="9811748at2"/>
<dbReference type="Proteomes" id="UP000001365">
    <property type="component" value="Chromosome"/>
</dbReference>
<dbReference type="GO" id="GO:0022625">
    <property type="term" value="C:cytosolic large ribosomal subunit"/>
    <property type="evidence" value="ECO:0007669"/>
    <property type="project" value="TreeGrafter"/>
</dbReference>
<dbReference type="GO" id="GO:0003729">
    <property type="term" value="F:mRNA binding"/>
    <property type="evidence" value="ECO:0007669"/>
    <property type="project" value="TreeGrafter"/>
</dbReference>
<dbReference type="GO" id="GO:0003735">
    <property type="term" value="F:structural constituent of ribosome"/>
    <property type="evidence" value="ECO:0007669"/>
    <property type="project" value="InterPro"/>
</dbReference>
<dbReference type="GO" id="GO:0006412">
    <property type="term" value="P:translation"/>
    <property type="evidence" value="ECO:0007669"/>
    <property type="project" value="UniProtKB-UniRule"/>
</dbReference>
<dbReference type="CDD" id="cd00387">
    <property type="entry name" value="Ribosomal_L7_L12"/>
    <property type="match status" value="1"/>
</dbReference>
<dbReference type="FunFam" id="1.20.5.710:FF:000002">
    <property type="entry name" value="50S ribosomal protein L7/L12"/>
    <property type="match status" value="1"/>
</dbReference>
<dbReference type="FunFam" id="3.30.1390.10:FF:000001">
    <property type="entry name" value="50S ribosomal protein L7/L12"/>
    <property type="match status" value="1"/>
</dbReference>
<dbReference type="Gene3D" id="3.30.1390.10">
    <property type="match status" value="1"/>
</dbReference>
<dbReference type="Gene3D" id="1.20.5.710">
    <property type="entry name" value="Single helix bin"/>
    <property type="match status" value="1"/>
</dbReference>
<dbReference type="HAMAP" id="MF_00368">
    <property type="entry name" value="Ribosomal_bL12"/>
    <property type="match status" value="1"/>
</dbReference>
<dbReference type="InterPro" id="IPR000206">
    <property type="entry name" value="Ribosomal_bL12"/>
</dbReference>
<dbReference type="InterPro" id="IPR013823">
    <property type="entry name" value="Ribosomal_bL12_C"/>
</dbReference>
<dbReference type="InterPro" id="IPR014719">
    <property type="entry name" value="Ribosomal_bL12_C/ClpS-like"/>
</dbReference>
<dbReference type="InterPro" id="IPR008932">
    <property type="entry name" value="Ribosomal_bL12_oligo"/>
</dbReference>
<dbReference type="InterPro" id="IPR036235">
    <property type="entry name" value="Ribosomal_bL12_oligo_N_sf"/>
</dbReference>
<dbReference type="NCBIfam" id="TIGR00855">
    <property type="entry name" value="L12"/>
    <property type="match status" value="1"/>
</dbReference>
<dbReference type="PANTHER" id="PTHR45987">
    <property type="entry name" value="39S RIBOSOMAL PROTEIN L12"/>
    <property type="match status" value="1"/>
</dbReference>
<dbReference type="PANTHER" id="PTHR45987:SF4">
    <property type="entry name" value="LARGE RIBOSOMAL SUBUNIT PROTEIN BL12M"/>
    <property type="match status" value="1"/>
</dbReference>
<dbReference type="Pfam" id="PF00542">
    <property type="entry name" value="Ribosomal_L12"/>
    <property type="match status" value="1"/>
</dbReference>
<dbReference type="Pfam" id="PF16320">
    <property type="entry name" value="Ribosomal_L12_N"/>
    <property type="match status" value="1"/>
</dbReference>
<dbReference type="SUPFAM" id="SSF54736">
    <property type="entry name" value="ClpS-like"/>
    <property type="match status" value="1"/>
</dbReference>
<dbReference type="SUPFAM" id="SSF48300">
    <property type="entry name" value="Ribosomal protein L7/12, oligomerisation (N-terminal) domain"/>
    <property type="match status" value="1"/>
</dbReference>
<accession>C0M8X3</accession>
<keyword id="KW-0687">Ribonucleoprotein</keyword>
<keyword id="KW-0689">Ribosomal protein</keyword>
<organism>
    <name type="scientific">Streptococcus equi subsp. equi (strain 4047)</name>
    <dbReference type="NCBI Taxonomy" id="553482"/>
    <lineage>
        <taxon>Bacteria</taxon>
        <taxon>Bacillati</taxon>
        <taxon>Bacillota</taxon>
        <taxon>Bacilli</taxon>
        <taxon>Lactobacillales</taxon>
        <taxon>Streptococcaceae</taxon>
        <taxon>Streptococcus</taxon>
    </lineage>
</organism>
<protein>
    <recommendedName>
        <fullName evidence="1">Large ribosomal subunit protein bL12</fullName>
    </recommendedName>
    <alternativeName>
        <fullName evidence="2">50S ribosomal protein L7/L12</fullName>
    </alternativeName>
</protein>
<reference key="1">
    <citation type="journal article" date="2009" name="PLoS Pathog.">
        <title>Genomic evidence for the evolution of Streptococcus equi: host restriction, increased virulence, and genetic exchange with human pathogens.</title>
        <authorList>
            <person name="Holden M.T.G."/>
            <person name="Heather Z."/>
            <person name="Paillot R."/>
            <person name="Steward K.F."/>
            <person name="Webb K."/>
            <person name="Ainslie F."/>
            <person name="Jourdan T."/>
            <person name="Bason N.C."/>
            <person name="Holroyd N.E."/>
            <person name="Mungall K."/>
            <person name="Quail M.A."/>
            <person name="Sanders M."/>
            <person name="Simmonds M."/>
            <person name="Willey D."/>
            <person name="Brooks K."/>
            <person name="Aanensen D.M."/>
            <person name="Spratt B.G."/>
            <person name="Jolley K.A."/>
            <person name="Maiden M.C.J."/>
            <person name="Kehoe M."/>
            <person name="Chanter N."/>
            <person name="Bentley S.D."/>
            <person name="Robinson C."/>
            <person name="Maskell D.J."/>
            <person name="Parkhill J."/>
            <person name="Waller A.S."/>
        </authorList>
    </citation>
    <scope>NUCLEOTIDE SEQUENCE [LARGE SCALE GENOMIC DNA]</scope>
    <source>
        <strain>4047</strain>
    </source>
</reference>
<sequence length="121" mass="12328">MALNIENIIAEIKEASILELNDLVKAIEEEFGVTAAAPVAVAAAGGAEEATKDSFDVELTSAGDKKVGVIKAVREITGLGLKEAKGLVDGAPANIKEGVAAAEAEEIKAKLEEAGATITLK</sequence>
<evidence type="ECO:0000255" key="1">
    <source>
        <dbReference type="HAMAP-Rule" id="MF_00368"/>
    </source>
</evidence>
<evidence type="ECO:0000305" key="2"/>
<name>RL7_STRE4</name>
<proteinExistence type="inferred from homology"/>
<feature type="chain" id="PRO_1000133861" description="Large ribosomal subunit protein bL12">
    <location>
        <begin position="1"/>
        <end position="121"/>
    </location>
</feature>
<gene>
    <name evidence="1" type="primary">rplL</name>
    <name type="ordered locus">SEQ_1390</name>
</gene>